<feature type="chain" id="PRO_1000165699" description="Large ribosomal subunit protein uL1">
    <location>
        <begin position="1"/>
        <end position="231"/>
    </location>
</feature>
<accession>B9DKX1</accession>
<keyword id="KW-1185">Reference proteome</keyword>
<keyword id="KW-0678">Repressor</keyword>
<keyword id="KW-0687">Ribonucleoprotein</keyword>
<keyword id="KW-0689">Ribosomal protein</keyword>
<keyword id="KW-0694">RNA-binding</keyword>
<keyword id="KW-0699">rRNA-binding</keyword>
<keyword id="KW-0810">Translation regulation</keyword>
<keyword id="KW-0820">tRNA-binding</keyword>
<comment type="function">
    <text evidence="1">Binds directly to 23S rRNA. The L1 stalk is quite mobile in the ribosome, and is involved in E site tRNA release.</text>
</comment>
<comment type="function">
    <text evidence="1">Protein L1 is also a translational repressor protein, it controls the translation of the L11 operon by binding to its mRNA.</text>
</comment>
<comment type="subunit">
    <text evidence="1">Part of the 50S ribosomal subunit.</text>
</comment>
<comment type="similarity">
    <text evidence="1">Belongs to the universal ribosomal protein uL1 family.</text>
</comment>
<protein>
    <recommendedName>
        <fullName evidence="1">Large ribosomal subunit protein uL1</fullName>
    </recommendedName>
    <alternativeName>
        <fullName evidence="2">50S ribosomal protein L1</fullName>
    </alternativeName>
</protein>
<sequence length="231" mass="24806">MAKKGKKYLDAASKVDRNEHYSVEDAISLAKETSVANFDATVEVAFRLVIDTRKNDQQIRGAVVLPHGTGKTQRVLVFAKGDKASEAEAAGADYVGESEYATKIQQGWFDFDVVVATPDMMGEVGKLGRVLGPKGLMPNPKTGTVTMDVKKAVEEIKAGKVEYRAEKAGIIHASIGKVSFSTEDLVENFNTLQDVIAKAKPASAKGTYFKSVAVTTTMGPGVKVDTSNFKL</sequence>
<name>RL1_STACT</name>
<organism>
    <name type="scientific">Staphylococcus carnosus (strain TM300)</name>
    <dbReference type="NCBI Taxonomy" id="396513"/>
    <lineage>
        <taxon>Bacteria</taxon>
        <taxon>Bacillati</taxon>
        <taxon>Bacillota</taxon>
        <taxon>Bacilli</taxon>
        <taxon>Bacillales</taxon>
        <taxon>Staphylococcaceae</taxon>
        <taxon>Staphylococcus</taxon>
    </lineage>
</organism>
<dbReference type="EMBL" id="AM295250">
    <property type="protein sequence ID" value="CAL27107.1"/>
    <property type="molecule type" value="Genomic_DNA"/>
</dbReference>
<dbReference type="RefSeq" id="WP_012664222.1">
    <property type="nucleotide sequence ID" value="NC_012121.1"/>
</dbReference>
<dbReference type="SMR" id="B9DKX1"/>
<dbReference type="GeneID" id="93795124"/>
<dbReference type="KEGG" id="sca:SCA_0194"/>
<dbReference type="eggNOG" id="COG0081">
    <property type="taxonomic scope" value="Bacteria"/>
</dbReference>
<dbReference type="HOGENOM" id="CLU_062853_0_0_9"/>
<dbReference type="OrthoDB" id="9803740at2"/>
<dbReference type="BioCyc" id="SCAR396513:SCA_RS01005-MONOMER"/>
<dbReference type="Proteomes" id="UP000000444">
    <property type="component" value="Chromosome"/>
</dbReference>
<dbReference type="GO" id="GO:0015934">
    <property type="term" value="C:large ribosomal subunit"/>
    <property type="evidence" value="ECO:0007669"/>
    <property type="project" value="InterPro"/>
</dbReference>
<dbReference type="GO" id="GO:0019843">
    <property type="term" value="F:rRNA binding"/>
    <property type="evidence" value="ECO:0007669"/>
    <property type="project" value="UniProtKB-UniRule"/>
</dbReference>
<dbReference type="GO" id="GO:0003735">
    <property type="term" value="F:structural constituent of ribosome"/>
    <property type="evidence" value="ECO:0007669"/>
    <property type="project" value="InterPro"/>
</dbReference>
<dbReference type="GO" id="GO:0000049">
    <property type="term" value="F:tRNA binding"/>
    <property type="evidence" value="ECO:0007669"/>
    <property type="project" value="UniProtKB-KW"/>
</dbReference>
<dbReference type="GO" id="GO:0006417">
    <property type="term" value="P:regulation of translation"/>
    <property type="evidence" value="ECO:0007669"/>
    <property type="project" value="UniProtKB-KW"/>
</dbReference>
<dbReference type="GO" id="GO:0006412">
    <property type="term" value="P:translation"/>
    <property type="evidence" value="ECO:0007669"/>
    <property type="project" value="UniProtKB-UniRule"/>
</dbReference>
<dbReference type="CDD" id="cd00403">
    <property type="entry name" value="Ribosomal_L1"/>
    <property type="match status" value="1"/>
</dbReference>
<dbReference type="FunFam" id="3.40.50.790:FF:000001">
    <property type="entry name" value="50S ribosomal protein L1"/>
    <property type="match status" value="1"/>
</dbReference>
<dbReference type="Gene3D" id="3.30.190.20">
    <property type="match status" value="1"/>
</dbReference>
<dbReference type="Gene3D" id="3.40.50.790">
    <property type="match status" value="1"/>
</dbReference>
<dbReference type="HAMAP" id="MF_01318_B">
    <property type="entry name" value="Ribosomal_uL1_B"/>
    <property type="match status" value="1"/>
</dbReference>
<dbReference type="InterPro" id="IPR005878">
    <property type="entry name" value="Ribosom_uL1_bac-type"/>
</dbReference>
<dbReference type="InterPro" id="IPR002143">
    <property type="entry name" value="Ribosomal_uL1"/>
</dbReference>
<dbReference type="InterPro" id="IPR023674">
    <property type="entry name" value="Ribosomal_uL1-like"/>
</dbReference>
<dbReference type="InterPro" id="IPR028364">
    <property type="entry name" value="Ribosomal_uL1/biogenesis"/>
</dbReference>
<dbReference type="InterPro" id="IPR016095">
    <property type="entry name" value="Ribosomal_uL1_3-a/b-sand"/>
</dbReference>
<dbReference type="InterPro" id="IPR023673">
    <property type="entry name" value="Ribosomal_uL1_CS"/>
</dbReference>
<dbReference type="NCBIfam" id="TIGR01169">
    <property type="entry name" value="rplA_bact"/>
    <property type="match status" value="1"/>
</dbReference>
<dbReference type="PANTHER" id="PTHR36427">
    <property type="entry name" value="54S RIBOSOMAL PROTEIN L1, MITOCHONDRIAL"/>
    <property type="match status" value="1"/>
</dbReference>
<dbReference type="PANTHER" id="PTHR36427:SF3">
    <property type="entry name" value="LARGE RIBOSOMAL SUBUNIT PROTEIN UL1M"/>
    <property type="match status" value="1"/>
</dbReference>
<dbReference type="Pfam" id="PF00687">
    <property type="entry name" value="Ribosomal_L1"/>
    <property type="match status" value="1"/>
</dbReference>
<dbReference type="PIRSF" id="PIRSF002155">
    <property type="entry name" value="Ribosomal_L1"/>
    <property type="match status" value="1"/>
</dbReference>
<dbReference type="SUPFAM" id="SSF56808">
    <property type="entry name" value="Ribosomal protein L1"/>
    <property type="match status" value="1"/>
</dbReference>
<dbReference type="PROSITE" id="PS01199">
    <property type="entry name" value="RIBOSOMAL_L1"/>
    <property type="match status" value="1"/>
</dbReference>
<gene>
    <name evidence="1" type="primary">rplA</name>
    <name type="ordered locus">Sca_0194</name>
</gene>
<reference key="1">
    <citation type="journal article" date="2009" name="Appl. Environ. Microbiol.">
        <title>Genome analysis of the meat starter culture bacterium Staphylococcus carnosus TM300.</title>
        <authorList>
            <person name="Rosenstein R."/>
            <person name="Nerz C."/>
            <person name="Biswas L."/>
            <person name="Resch A."/>
            <person name="Raddatz G."/>
            <person name="Schuster S.C."/>
            <person name="Goetz F."/>
        </authorList>
    </citation>
    <scope>NUCLEOTIDE SEQUENCE [LARGE SCALE GENOMIC DNA]</scope>
    <source>
        <strain>TM300</strain>
    </source>
</reference>
<evidence type="ECO:0000255" key="1">
    <source>
        <dbReference type="HAMAP-Rule" id="MF_01318"/>
    </source>
</evidence>
<evidence type="ECO:0000305" key="2"/>
<proteinExistence type="inferred from homology"/>